<accession>Q46H42</accession>
<organism>
    <name type="scientific">Prochlorococcus marinus (strain NATL2A)</name>
    <dbReference type="NCBI Taxonomy" id="59920"/>
    <lineage>
        <taxon>Bacteria</taxon>
        <taxon>Bacillati</taxon>
        <taxon>Cyanobacteriota</taxon>
        <taxon>Cyanophyceae</taxon>
        <taxon>Synechococcales</taxon>
        <taxon>Prochlorococcaceae</taxon>
        <taxon>Prochlorococcus</taxon>
    </lineage>
</organism>
<dbReference type="EMBL" id="CP000095">
    <property type="protein sequence ID" value="AAZ59190.1"/>
    <property type="molecule type" value="Genomic_DNA"/>
</dbReference>
<dbReference type="RefSeq" id="WP_011294336.1">
    <property type="nucleotide sequence ID" value="NC_007335.2"/>
</dbReference>
<dbReference type="SMR" id="Q46H42"/>
<dbReference type="STRING" id="59920.PMN2A_1702"/>
<dbReference type="KEGG" id="pmn:PMN2A_1702"/>
<dbReference type="HOGENOM" id="CLU_031114_0_2_3"/>
<dbReference type="OrthoDB" id="9804503at2"/>
<dbReference type="PhylomeDB" id="Q46H42"/>
<dbReference type="Proteomes" id="UP000002535">
    <property type="component" value="Chromosome"/>
</dbReference>
<dbReference type="GO" id="GO:0031676">
    <property type="term" value="C:plasma membrane-derived thylakoid membrane"/>
    <property type="evidence" value="ECO:0007669"/>
    <property type="project" value="UniProtKB-SubCell"/>
</dbReference>
<dbReference type="GO" id="GO:0045158">
    <property type="term" value="F:electron transporter, transferring electrons within cytochrome b6/f complex of photosystem II activity"/>
    <property type="evidence" value="ECO:0007669"/>
    <property type="project" value="UniProtKB-UniRule"/>
</dbReference>
<dbReference type="GO" id="GO:0046872">
    <property type="term" value="F:metal ion binding"/>
    <property type="evidence" value="ECO:0007669"/>
    <property type="project" value="UniProtKB-KW"/>
</dbReference>
<dbReference type="GO" id="GO:0016491">
    <property type="term" value="F:oxidoreductase activity"/>
    <property type="evidence" value="ECO:0007669"/>
    <property type="project" value="InterPro"/>
</dbReference>
<dbReference type="GO" id="GO:0015979">
    <property type="term" value="P:photosynthesis"/>
    <property type="evidence" value="ECO:0007669"/>
    <property type="project" value="UniProtKB-UniRule"/>
</dbReference>
<dbReference type="GO" id="GO:0022904">
    <property type="term" value="P:respiratory electron transport chain"/>
    <property type="evidence" value="ECO:0007669"/>
    <property type="project" value="InterPro"/>
</dbReference>
<dbReference type="CDD" id="cd00284">
    <property type="entry name" value="Cytochrome_b_N"/>
    <property type="match status" value="1"/>
</dbReference>
<dbReference type="FunFam" id="1.20.810.10:FF:000001">
    <property type="entry name" value="Cytochrome b6"/>
    <property type="match status" value="1"/>
</dbReference>
<dbReference type="Gene3D" id="1.20.810.10">
    <property type="entry name" value="Cytochrome Bc1 Complex, Chain C"/>
    <property type="match status" value="1"/>
</dbReference>
<dbReference type="HAMAP" id="MF_00633">
    <property type="entry name" value="Cytb6_f_cytb6"/>
    <property type="match status" value="1"/>
</dbReference>
<dbReference type="InterPro" id="IPR005797">
    <property type="entry name" value="Cyt_b/b6_N"/>
</dbReference>
<dbReference type="InterPro" id="IPR023530">
    <property type="entry name" value="Cyt_B6_PetB"/>
</dbReference>
<dbReference type="InterPro" id="IPR027387">
    <property type="entry name" value="Cytb/b6-like_sf"/>
</dbReference>
<dbReference type="InterPro" id="IPR048259">
    <property type="entry name" value="Cytochrome_b_N_euk/bac"/>
</dbReference>
<dbReference type="InterPro" id="IPR016174">
    <property type="entry name" value="Di-haem_cyt_TM"/>
</dbReference>
<dbReference type="NCBIfam" id="NF002990">
    <property type="entry name" value="PRK03735.1"/>
    <property type="match status" value="1"/>
</dbReference>
<dbReference type="PANTHER" id="PTHR19271">
    <property type="entry name" value="CYTOCHROME B"/>
    <property type="match status" value="1"/>
</dbReference>
<dbReference type="PANTHER" id="PTHR19271:SF16">
    <property type="entry name" value="CYTOCHROME B"/>
    <property type="match status" value="1"/>
</dbReference>
<dbReference type="Pfam" id="PF00033">
    <property type="entry name" value="Cytochrome_B"/>
    <property type="match status" value="1"/>
</dbReference>
<dbReference type="PIRSF" id="PIRSF000032">
    <property type="entry name" value="Cytochrome_b6"/>
    <property type="match status" value="1"/>
</dbReference>
<dbReference type="SUPFAM" id="SSF81342">
    <property type="entry name" value="Transmembrane di-heme cytochromes"/>
    <property type="match status" value="1"/>
</dbReference>
<dbReference type="PROSITE" id="PS51002">
    <property type="entry name" value="CYTB_NTER"/>
    <property type="match status" value="1"/>
</dbReference>
<reference key="1">
    <citation type="journal article" date="2007" name="PLoS Genet.">
        <title>Patterns and implications of gene gain and loss in the evolution of Prochlorococcus.</title>
        <authorList>
            <person name="Kettler G.C."/>
            <person name="Martiny A.C."/>
            <person name="Huang K."/>
            <person name="Zucker J."/>
            <person name="Coleman M.L."/>
            <person name="Rodrigue S."/>
            <person name="Chen F."/>
            <person name="Lapidus A."/>
            <person name="Ferriera S."/>
            <person name="Johnson J."/>
            <person name="Steglich C."/>
            <person name="Church G.M."/>
            <person name="Richardson P."/>
            <person name="Chisholm S.W."/>
        </authorList>
    </citation>
    <scope>NUCLEOTIDE SEQUENCE [LARGE SCALE GENOMIC DNA]</scope>
    <source>
        <strain>NATL2A</strain>
    </source>
</reference>
<gene>
    <name evidence="1" type="primary">petB</name>
    <name type="ordered locus">PMN2A_1702</name>
</gene>
<sequence>MANSSPVYDWFQERLEIQDIADDVTSKYVPPHVNIFYCLGGITLVCFLIQFATGFAMTFYYKPTVTEAYSSVSYLMTDVSFGWLIRSVHRWSASMMVLMLILHVFRVYLTGGFKRPRELTWITGVVMAVITVAFGVTGYSLPWDQVGYWAVKIVSGVPAAIPVIGDFMVELLRGGESVGQSTLTRFYSLHTFVMPWLLAVFMLMHFLMIRKQGISGPL</sequence>
<evidence type="ECO:0000255" key="1">
    <source>
        <dbReference type="HAMAP-Rule" id="MF_00633"/>
    </source>
</evidence>
<proteinExistence type="inferred from homology"/>
<comment type="function">
    <text evidence="1">Component of the cytochrome b6-f complex, which mediates electron transfer between photosystem II (PSII) and photosystem I (PSI), cyclic electron flow around PSI, and state transitions.</text>
</comment>
<comment type="cofactor">
    <cofactor evidence="1">
        <name>heme b</name>
        <dbReference type="ChEBI" id="CHEBI:60344"/>
    </cofactor>
    <text evidence="1">Binds 2 heme b groups non-covalently with two histidine residues as axial ligands.</text>
</comment>
<comment type="cofactor">
    <cofactor evidence="1">
        <name>heme c</name>
        <dbReference type="ChEBI" id="CHEBI:61717"/>
    </cofactor>
    <text evidence="1">Binds one heme group covalently by a single cysteine link with no axial amino acid ligand. This heme was named heme ci.</text>
</comment>
<comment type="subunit">
    <text evidence="1">The 4 large subunits of the cytochrome b6-f complex are cytochrome b6, subunit IV (17 kDa polypeptide, PetD), cytochrome f and the Rieske protein, while the 4 small subunits are PetG, PetL, PetM and PetN. The complex functions as a dimer.</text>
</comment>
<comment type="subcellular location">
    <subcellularLocation>
        <location evidence="1">Cellular thylakoid membrane</location>
        <topology evidence="1">Multi-pass membrane protein</topology>
    </subcellularLocation>
</comment>
<comment type="miscellaneous">
    <text evidence="1">Heme 1 (or BH or b566) is high-potential and absorbs at about 566 nm, and heme 2 (or BL or b562) is low-potential and absorbs at about 562 nm.</text>
</comment>
<comment type="similarity">
    <text evidence="1">Belongs to the cytochrome b family. PetB subfamily.</text>
</comment>
<keyword id="KW-0249">Electron transport</keyword>
<keyword id="KW-0349">Heme</keyword>
<keyword id="KW-0408">Iron</keyword>
<keyword id="KW-0472">Membrane</keyword>
<keyword id="KW-0479">Metal-binding</keyword>
<keyword id="KW-0602">Photosynthesis</keyword>
<keyword id="KW-1185">Reference proteome</keyword>
<keyword id="KW-0793">Thylakoid</keyword>
<keyword id="KW-0812">Transmembrane</keyword>
<keyword id="KW-1133">Transmembrane helix</keyword>
<keyword id="KW-0813">Transport</keyword>
<feature type="chain" id="PRO_1000061414" description="Cytochrome b6">
    <location>
        <begin position="1"/>
        <end position="218"/>
    </location>
</feature>
<feature type="transmembrane region" description="Helical" evidence="1">
    <location>
        <begin position="35"/>
        <end position="55"/>
    </location>
</feature>
<feature type="transmembrane region" description="Helical" evidence="1">
    <location>
        <begin position="93"/>
        <end position="113"/>
    </location>
</feature>
<feature type="transmembrane region" description="Helical" evidence="1">
    <location>
        <begin position="119"/>
        <end position="139"/>
    </location>
</feature>
<feature type="transmembrane region" description="Helical" evidence="1">
    <location>
        <begin position="189"/>
        <end position="209"/>
    </location>
</feature>
<feature type="binding site" description="covalent" evidence="1">
    <location>
        <position position="38"/>
    </location>
    <ligand>
        <name>heme c</name>
        <dbReference type="ChEBI" id="CHEBI:61717"/>
    </ligand>
</feature>
<feature type="binding site" description="axial binding residue" evidence="1">
    <location>
        <position position="89"/>
    </location>
    <ligand>
        <name>heme b</name>
        <dbReference type="ChEBI" id="CHEBI:60344"/>
        <label>2</label>
    </ligand>
    <ligandPart>
        <name>Fe</name>
        <dbReference type="ChEBI" id="CHEBI:18248"/>
    </ligandPart>
</feature>
<feature type="binding site" description="axial binding residue" evidence="1">
    <location>
        <position position="103"/>
    </location>
    <ligand>
        <name>heme b</name>
        <dbReference type="ChEBI" id="CHEBI:60344"/>
        <label>1</label>
    </ligand>
    <ligandPart>
        <name>Fe</name>
        <dbReference type="ChEBI" id="CHEBI:18248"/>
    </ligandPart>
</feature>
<feature type="binding site" description="axial binding residue" evidence="1">
    <location>
        <position position="190"/>
    </location>
    <ligand>
        <name>heme b</name>
        <dbReference type="ChEBI" id="CHEBI:60344"/>
        <label>2</label>
    </ligand>
    <ligandPart>
        <name>Fe</name>
        <dbReference type="ChEBI" id="CHEBI:18248"/>
    </ligandPart>
</feature>
<feature type="binding site" description="axial binding residue" evidence="1">
    <location>
        <position position="205"/>
    </location>
    <ligand>
        <name>heme b</name>
        <dbReference type="ChEBI" id="CHEBI:60344"/>
        <label>1</label>
    </ligand>
    <ligandPart>
        <name>Fe</name>
        <dbReference type="ChEBI" id="CHEBI:18248"/>
    </ligandPart>
</feature>
<name>CYB6_PROMT</name>
<protein>
    <recommendedName>
        <fullName evidence="1">Cytochrome b6</fullName>
    </recommendedName>
</protein>